<gene>
    <name type="primary">TPC1</name>
    <name type="ordered locus">YALI0F20262g</name>
</gene>
<keyword id="KW-0472">Membrane</keyword>
<keyword id="KW-0496">Mitochondrion</keyword>
<keyword id="KW-0999">Mitochondrion inner membrane</keyword>
<keyword id="KW-1185">Reference proteome</keyword>
<keyword id="KW-0677">Repeat</keyword>
<keyword id="KW-0812">Transmembrane</keyword>
<keyword id="KW-1133">Transmembrane helix</keyword>
<keyword id="KW-0813">Transport</keyword>
<feature type="chain" id="PRO_0000320476" description="Mitochondrial thiamine pyrophosphate carrier 1">
    <location>
        <begin position="1"/>
        <end position="336"/>
    </location>
</feature>
<feature type="transmembrane region" description="Helical; Name=1" evidence="2">
    <location>
        <begin position="17"/>
        <end position="37"/>
    </location>
</feature>
<feature type="transmembrane region" description="Helical; Name=2" evidence="2">
    <location>
        <begin position="66"/>
        <end position="86"/>
    </location>
</feature>
<feature type="transmembrane region" description="Helical; Name=3" evidence="2">
    <location>
        <begin position="118"/>
        <end position="138"/>
    </location>
</feature>
<feature type="transmembrane region" description="Helical; Name=4" evidence="2">
    <location>
        <begin position="177"/>
        <end position="197"/>
    </location>
</feature>
<feature type="transmembrane region" description="Helical; Name=5" evidence="2">
    <location>
        <begin position="228"/>
        <end position="244"/>
    </location>
</feature>
<feature type="transmembrane region" description="Helical; Name=6" evidence="2">
    <location>
        <begin position="298"/>
        <end position="315"/>
    </location>
</feature>
<feature type="repeat" description="Solcar 1">
    <location>
        <begin position="11"/>
        <end position="98"/>
    </location>
</feature>
<feature type="repeat" description="Solcar 2">
    <location>
        <begin position="112"/>
        <end position="202"/>
    </location>
</feature>
<feature type="repeat" description="Solcar 3">
    <location>
        <begin position="221"/>
        <end position="323"/>
    </location>
</feature>
<sequence length="336" mass="37139">MSNHLSSDSDISSTESMLCGGIAGMVSRFCIAPLDVVKIRLQLQKDGSRYYRGIFQTMQQIVRDEGVTALWKGNIPAELLYVFYGATQFVTYHHVNQVINAYNETAEKWKISSGAQSFIAGATAGAGATIATYPFDLFRTLFAAQGAKNCNVKNYTSLFQTFKLIYKTEGPLGFFRGVSSSIISIAPYMGLFFASYGRVKDSLDAFSNKHHDLLVSYNLPTKGWQEATAGLCAGTASKALVFPLDTIRKRLQTQGRMDVSYKELSGKPGVQRLLDSYNPFVMARRIIVAEGCRGLYKGFLVSLIKSAPTSAITMYTFEKSLSILRWWKAQGKSLEA</sequence>
<reference key="1">
    <citation type="journal article" date="2004" name="Nature">
        <title>Genome evolution in yeasts.</title>
        <authorList>
            <person name="Dujon B."/>
            <person name="Sherman D."/>
            <person name="Fischer G."/>
            <person name="Durrens P."/>
            <person name="Casaregola S."/>
            <person name="Lafontaine I."/>
            <person name="de Montigny J."/>
            <person name="Marck C."/>
            <person name="Neuveglise C."/>
            <person name="Talla E."/>
            <person name="Goffard N."/>
            <person name="Frangeul L."/>
            <person name="Aigle M."/>
            <person name="Anthouard V."/>
            <person name="Babour A."/>
            <person name="Barbe V."/>
            <person name="Barnay S."/>
            <person name="Blanchin S."/>
            <person name="Beckerich J.-M."/>
            <person name="Beyne E."/>
            <person name="Bleykasten C."/>
            <person name="Boisrame A."/>
            <person name="Boyer J."/>
            <person name="Cattolico L."/>
            <person name="Confanioleri F."/>
            <person name="de Daruvar A."/>
            <person name="Despons L."/>
            <person name="Fabre E."/>
            <person name="Fairhead C."/>
            <person name="Ferry-Dumazet H."/>
            <person name="Groppi A."/>
            <person name="Hantraye F."/>
            <person name="Hennequin C."/>
            <person name="Jauniaux N."/>
            <person name="Joyet P."/>
            <person name="Kachouri R."/>
            <person name="Kerrest A."/>
            <person name="Koszul R."/>
            <person name="Lemaire M."/>
            <person name="Lesur I."/>
            <person name="Ma L."/>
            <person name="Muller H."/>
            <person name="Nicaud J.-M."/>
            <person name="Nikolski M."/>
            <person name="Oztas S."/>
            <person name="Ozier-Kalogeropoulos O."/>
            <person name="Pellenz S."/>
            <person name="Potier S."/>
            <person name="Richard G.-F."/>
            <person name="Straub M.-L."/>
            <person name="Suleau A."/>
            <person name="Swennen D."/>
            <person name="Tekaia F."/>
            <person name="Wesolowski-Louvel M."/>
            <person name="Westhof E."/>
            <person name="Wirth B."/>
            <person name="Zeniou-Meyer M."/>
            <person name="Zivanovic Y."/>
            <person name="Bolotin-Fukuhara M."/>
            <person name="Thierry A."/>
            <person name="Bouchier C."/>
            <person name="Caudron B."/>
            <person name="Scarpelli C."/>
            <person name="Gaillardin C."/>
            <person name="Weissenbach J."/>
            <person name="Wincker P."/>
            <person name="Souciet J.-L."/>
        </authorList>
    </citation>
    <scope>NUCLEOTIDE SEQUENCE [LARGE SCALE GENOMIC DNA]</scope>
    <source>
        <strain>CLIB 122 / E 150</strain>
    </source>
</reference>
<name>TPC1_YARLI</name>
<dbReference type="EMBL" id="CR382132">
    <property type="protein sequence ID" value="CAG78464.1"/>
    <property type="molecule type" value="Genomic_DNA"/>
</dbReference>
<dbReference type="RefSeq" id="XP_505655.1">
    <property type="nucleotide sequence ID" value="XM_505655.1"/>
</dbReference>
<dbReference type="SMR" id="Q6C107"/>
<dbReference type="FunCoup" id="Q6C107">
    <property type="interactions" value="31"/>
</dbReference>
<dbReference type="STRING" id="284591.Q6C107"/>
<dbReference type="EnsemblFungi" id="CAG78464">
    <property type="protein sequence ID" value="CAG78464"/>
    <property type="gene ID" value="YALI0_F20262g"/>
</dbReference>
<dbReference type="KEGG" id="yli:2907794"/>
<dbReference type="VEuPathDB" id="FungiDB:YALI0_F20262g"/>
<dbReference type="HOGENOM" id="CLU_015166_10_3_1"/>
<dbReference type="InParanoid" id="Q6C107"/>
<dbReference type="OMA" id="MYVCYGA"/>
<dbReference type="OrthoDB" id="123878at4891"/>
<dbReference type="Proteomes" id="UP000001300">
    <property type="component" value="Chromosome F"/>
</dbReference>
<dbReference type="GO" id="GO:0005743">
    <property type="term" value="C:mitochondrial inner membrane"/>
    <property type="evidence" value="ECO:0000318"/>
    <property type="project" value="GO_Central"/>
</dbReference>
<dbReference type="GO" id="GO:0015234">
    <property type="term" value="F:thiamine transmembrane transporter activity"/>
    <property type="evidence" value="ECO:0000318"/>
    <property type="project" value="GO_Central"/>
</dbReference>
<dbReference type="GO" id="GO:0030974">
    <property type="term" value="P:thiamine pyrophosphate transmembrane transport"/>
    <property type="evidence" value="ECO:0000318"/>
    <property type="project" value="GO_Central"/>
</dbReference>
<dbReference type="FunFam" id="1.50.40.10:FF:000011">
    <property type="entry name" value="Mitochondrial thiamine pyrophosphate carrier 1"/>
    <property type="match status" value="1"/>
</dbReference>
<dbReference type="Gene3D" id="1.50.40.10">
    <property type="entry name" value="Mitochondrial carrier domain"/>
    <property type="match status" value="1"/>
</dbReference>
<dbReference type="InterPro" id="IPR002067">
    <property type="entry name" value="Mit_carrier"/>
</dbReference>
<dbReference type="InterPro" id="IPR018108">
    <property type="entry name" value="Mitochondrial_sb/sol_carrier"/>
</dbReference>
<dbReference type="InterPro" id="IPR023395">
    <property type="entry name" value="Mt_carrier_dom_sf"/>
</dbReference>
<dbReference type="PANTHER" id="PTHR24089">
    <property type="entry name" value="SOLUTE CARRIER FAMILY 25"/>
    <property type="match status" value="1"/>
</dbReference>
<dbReference type="Pfam" id="PF00153">
    <property type="entry name" value="Mito_carr"/>
    <property type="match status" value="3"/>
</dbReference>
<dbReference type="PRINTS" id="PR00926">
    <property type="entry name" value="MITOCARRIER"/>
</dbReference>
<dbReference type="SUPFAM" id="SSF103506">
    <property type="entry name" value="Mitochondrial carrier"/>
    <property type="match status" value="1"/>
</dbReference>
<dbReference type="PROSITE" id="PS50920">
    <property type="entry name" value="SOLCAR"/>
    <property type="match status" value="3"/>
</dbReference>
<protein>
    <recommendedName>
        <fullName>Mitochondrial thiamine pyrophosphate carrier 1</fullName>
    </recommendedName>
</protein>
<proteinExistence type="inferred from homology"/>
<organism>
    <name type="scientific">Yarrowia lipolytica (strain CLIB 122 / E 150)</name>
    <name type="common">Yeast</name>
    <name type="synonym">Candida lipolytica</name>
    <dbReference type="NCBI Taxonomy" id="284591"/>
    <lineage>
        <taxon>Eukaryota</taxon>
        <taxon>Fungi</taxon>
        <taxon>Dikarya</taxon>
        <taxon>Ascomycota</taxon>
        <taxon>Saccharomycotina</taxon>
        <taxon>Dipodascomycetes</taxon>
        <taxon>Dipodascales</taxon>
        <taxon>Dipodascales incertae sedis</taxon>
        <taxon>Yarrowia</taxon>
    </lineage>
</organism>
<evidence type="ECO:0000250" key="1"/>
<evidence type="ECO:0000255" key="2"/>
<evidence type="ECO:0000305" key="3"/>
<comment type="function">
    <text evidence="1">Mitochondrial transporter that mediates uptake of thiamine pyrophosphate (ThPP) into mitochondria.</text>
</comment>
<comment type="subcellular location">
    <subcellularLocation>
        <location evidence="1">Mitochondrion inner membrane</location>
        <topology evidence="1">Multi-pass membrane protein</topology>
    </subcellularLocation>
</comment>
<comment type="similarity">
    <text evidence="3">Belongs to the mitochondrial carrier (TC 2.A.29) family.</text>
</comment>
<accession>Q6C107</accession>